<evidence type="ECO:0000255" key="1">
    <source>
        <dbReference type="HAMAP-Rule" id="MF_01325"/>
    </source>
</evidence>
<evidence type="ECO:0000256" key="2">
    <source>
        <dbReference type="SAM" id="MobiDB-lite"/>
    </source>
</evidence>
<evidence type="ECO:0000305" key="3"/>
<keyword id="KW-0488">Methylation</keyword>
<keyword id="KW-1185">Reference proteome</keyword>
<keyword id="KW-0687">Ribonucleoprotein</keyword>
<keyword id="KW-0689">Ribosomal protein</keyword>
<keyword id="KW-0694">RNA-binding</keyword>
<keyword id="KW-0699">rRNA-binding</keyword>
<organism>
    <name type="scientific">Cupriavidus metallidurans (strain ATCC 43123 / DSM 2839 / NBRC 102507 / CH34)</name>
    <name type="common">Ralstonia metallidurans</name>
    <dbReference type="NCBI Taxonomy" id="266264"/>
    <lineage>
        <taxon>Bacteria</taxon>
        <taxon>Pseudomonadati</taxon>
        <taxon>Pseudomonadota</taxon>
        <taxon>Betaproteobacteria</taxon>
        <taxon>Burkholderiales</taxon>
        <taxon>Burkholderiaceae</taxon>
        <taxon>Cupriavidus</taxon>
    </lineage>
</organism>
<name>RL3_CUPMC</name>
<feature type="chain" id="PRO_1000052120" description="Large ribosomal subunit protein uL3">
    <location>
        <begin position="1"/>
        <end position="214"/>
    </location>
</feature>
<feature type="region of interest" description="Disordered" evidence="2">
    <location>
        <begin position="133"/>
        <end position="153"/>
    </location>
</feature>
<feature type="modified residue" description="N5-methylglutamine" evidence="1">
    <location>
        <position position="153"/>
    </location>
</feature>
<proteinExistence type="inferred from homology"/>
<accession>Q1LI37</accession>
<sequence length="214" mass="22435">MSLGLVGRKVGMTRIFTDDGDSIPVTVVEVGDNRVTQIKTDETDGYTAVQVTFGSRRASRVTKPLAGHLAKAGVEAGEVIKEFRIDAAKAAELQAGSSLSVDLFQVGQKIDVQGVSIGKGYAGTIKRHHFASGRATHGNSRSHNVPGSIGMAQDPGRVFPGKRMTGHLGDATRTVQNLEIAKIDAERKLLLVKGAIPGSKGGKVIVTPAVKAKA</sequence>
<gene>
    <name evidence="1" type="primary">rplC</name>
    <name type="ordered locus">Rmet_3317</name>
</gene>
<comment type="function">
    <text evidence="1">One of the primary rRNA binding proteins, it binds directly near the 3'-end of the 23S rRNA, where it nucleates assembly of the 50S subunit.</text>
</comment>
<comment type="subunit">
    <text evidence="1">Part of the 50S ribosomal subunit. Forms a cluster with proteins L14 and L19.</text>
</comment>
<comment type="PTM">
    <text evidence="1">Methylated by PrmB.</text>
</comment>
<comment type="similarity">
    <text evidence="1">Belongs to the universal ribosomal protein uL3 family.</text>
</comment>
<protein>
    <recommendedName>
        <fullName evidence="1">Large ribosomal subunit protein uL3</fullName>
    </recommendedName>
    <alternativeName>
        <fullName evidence="3">50S ribosomal protein L3</fullName>
    </alternativeName>
</protein>
<reference key="1">
    <citation type="journal article" date="2010" name="PLoS ONE">
        <title>The complete genome sequence of Cupriavidus metallidurans strain CH34, a master survivalist in harsh and anthropogenic environments.</title>
        <authorList>
            <person name="Janssen P.J."/>
            <person name="Van Houdt R."/>
            <person name="Moors H."/>
            <person name="Monsieurs P."/>
            <person name="Morin N."/>
            <person name="Michaux A."/>
            <person name="Benotmane M.A."/>
            <person name="Leys N."/>
            <person name="Vallaeys T."/>
            <person name="Lapidus A."/>
            <person name="Monchy S."/>
            <person name="Medigue C."/>
            <person name="Taghavi S."/>
            <person name="McCorkle S."/>
            <person name="Dunn J."/>
            <person name="van der Lelie D."/>
            <person name="Mergeay M."/>
        </authorList>
    </citation>
    <scope>NUCLEOTIDE SEQUENCE [LARGE SCALE GENOMIC DNA]</scope>
    <source>
        <strain>ATCC 43123 / DSM 2839 / NBRC 102507 / CH34</strain>
    </source>
</reference>
<dbReference type="EMBL" id="CP000352">
    <property type="protein sequence ID" value="ABF10189.1"/>
    <property type="molecule type" value="Genomic_DNA"/>
</dbReference>
<dbReference type="RefSeq" id="WP_011517768.1">
    <property type="nucleotide sequence ID" value="NC_007973.1"/>
</dbReference>
<dbReference type="SMR" id="Q1LI37"/>
<dbReference type="STRING" id="266264.Rmet_3317"/>
<dbReference type="KEGG" id="rme:Rmet_3317"/>
<dbReference type="eggNOG" id="COG0087">
    <property type="taxonomic scope" value="Bacteria"/>
</dbReference>
<dbReference type="HOGENOM" id="CLU_044142_4_1_4"/>
<dbReference type="Proteomes" id="UP000002429">
    <property type="component" value="Chromosome"/>
</dbReference>
<dbReference type="GO" id="GO:0022625">
    <property type="term" value="C:cytosolic large ribosomal subunit"/>
    <property type="evidence" value="ECO:0007669"/>
    <property type="project" value="TreeGrafter"/>
</dbReference>
<dbReference type="GO" id="GO:0019843">
    <property type="term" value="F:rRNA binding"/>
    <property type="evidence" value="ECO:0007669"/>
    <property type="project" value="UniProtKB-UniRule"/>
</dbReference>
<dbReference type="GO" id="GO:0003735">
    <property type="term" value="F:structural constituent of ribosome"/>
    <property type="evidence" value="ECO:0007669"/>
    <property type="project" value="InterPro"/>
</dbReference>
<dbReference type="GO" id="GO:0006412">
    <property type="term" value="P:translation"/>
    <property type="evidence" value="ECO:0007669"/>
    <property type="project" value="UniProtKB-UniRule"/>
</dbReference>
<dbReference type="FunFam" id="2.40.30.10:FF:000004">
    <property type="entry name" value="50S ribosomal protein L3"/>
    <property type="match status" value="1"/>
</dbReference>
<dbReference type="FunFam" id="3.30.160.810:FF:000001">
    <property type="entry name" value="50S ribosomal protein L3"/>
    <property type="match status" value="1"/>
</dbReference>
<dbReference type="Gene3D" id="3.30.160.810">
    <property type="match status" value="1"/>
</dbReference>
<dbReference type="Gene3D" id="2.40.30.10">
    <property type="entry name" value="Translation factors"/>
    <property type="match status" value="1"/>
</dbReference>
<dbReference type="HAMAP" id="MF_01325_B">
    <property type="entry name" value="Ribosomal_uL3_B"/>
    <property type="match status" value="1"/>
</dbReference>
<dbReference type="InterPro" id="IPR000597">
    <property type="entry name" value="Ribosomal_uL3"/>
</dbReference>
<dbReference type="InterPro" id="IPR019927">
    <property type="entry name" value="Ribosomal_uL3_bac/org-type"/>
</dbReference>
<dbReference type="InterPro" id="IPR019926">
    <property type="entry name" value="Ribosomal_uL3_CS"/>
</dbReference>
<dbReference type="InterPro" id="IPR009000">
    <property type="entry name" value="Transl_B-barrel_sf"/>
</dbReference>
<dbReference type="NCBIfam" id="TIGR03625">
    <property type="entry name" value="L3_bact"/>
    <property type="match status" value="1"/>
</dbReference>
<dbReference type="PANTHER" id="PTHR11229">
    <property type="entry name" value="50S RIBOSOMAL PROTEIN L3"/>
    <property type="match status" value="1"/>
</dbReference>
<dbReference type="PANTHER" id="PTHR11229:SF16">
    <property type="entry name" value="LARGE RIBOSOMAL SUBUNIT PROTEIN UL3C"/>
    <property type="match status" value="1"/>
</dbReference>
<dbReference type="Pfam" id="PF00297">
    <property type="entry name" value="Ribosomal_L3"/>
    <property type="match status" value="1"/>
</dbReference>
<dbReference type="SUPFAM" id="SSF50447">
    <property type="entry name" value="Translation proteins"/>
    <property type="match status" value="1"/>
</dbReference>
<dbReference type="PROSITE" id="PS00474">
    <property type="entry name" value="RIBOSOMAL_L3"/>
    <property type="match status" value="1"/>
</dbReference>